<feature type="chain" id="PRO_0000358165" description="NAD(P)H-quinone oxidoreductase subunit J">
    <location>
        <begin position="1"/>
        <end position="180"/>
    </location>
</feature>
<feature type="region of interest" description="Disordered" evidence="2">
    <location>
        <begin position="1"/>
        <end position="23"/>
    </location>
</feature>
<feature type="compositionally biased region" description="Polar residues" evidence="2">
    <location>
        <begin position="1"/>
        <end position="16"/>
    </location>
</feature>
<organism>
    <name type="scientific">Prochlorococcus marinus (strain MIT 9211)</name>
    <dbReference type="NCBI Taxonomy" id="93059"/>
    <lineage>
        <taxon>Bacteria</taxon>
        <taxon>Bacillati</taxon>
        <taxon>Cyanobacteriota</taxon>
        <taxon>Cyanophyceae</taxon>
        <taxon>Synechococcales</taxon>
        <taxon>Prochlorococcaceae</taxon>
        <taxon>Prochlorococcus</taxon>
    </lineage>
</organism>
<proteinExistence type="inferred from homology"/>
<evidence type="ECO:0000255" key="1">
    <source>
        <dbReference type="HAMAP-Rule" id="MF_01357"/>
    </source>
</evidence>
<evidence type="ECO:0000256" key="2">
    <source>
        <dbReference type="SAM" id="MobiDB-lite"/>
    </source>
</evidence>
<gene>
    <name evidence="1" type="primary">ndhJ</name>
    <name type="ordered locus">P9211_03181</name>
</gene>
<protein>
    <recommendedName>
        <fullName evidence="1">NAD(P)H-quinone oxidoreductase subunit J</fullName>
        <ecNumber evidence="1">7.1.1.-</ecNumber>
    </recommendedName>
    <alternativeName>
        <fullName>NAD(P)H dehydrogenase subunit J</fullName>
    </alternativeName>
    <alternativeName>
        <fullName evidence="1">NADH-plastoquinone oxidoreductase subunit J</fullName>
    </alternativeName>
    <alternativeName>
        <fullName evidence="1">NDH-1 subunit J</fullName>
        <shortName evidence="1">NDH-J</shortName>
    </alternativeName>
</protein>
<keyword id="KW-0472">Membrane</keyword>
<keyword id="KW-0520">NAD</keyword>
<keyword id="KW-0521">NADP</keyword>
<keyword id="KW-0618">Plastoquinone</keyword>
<keyword id="KW-0874">Quinone</keyword>
<keyword id="KW-1185">Reference proteome</keyword>
<keyword id="KW-0793">Thylakoid</keyword>
<keyword id="KW-1278">Translocase</keyword>
<keyword id="KW-0813">Transport</keyword>
<sequence length="180" mass="21136">MNEETQTSELTNTDQGPQIEPGPISKWLNQKGLIHKLLEPDEIGIENLGVDPQQLFKIVSELKMNGFNYLQCQGGYDEGPGLSLVCFYHLMEMKDFNEGDKPREVRLKVFLDRNGSLRVPSLYKLFRGCDWQERETYDMFGINFDGHPHPKRLLMPEDWRGWPLRKDYIQPDFYEMQDAY</sequence>
<dbReference type="EC" id="7.1.1.-" evidence="1"/>
<dbReference type="EMBL" id="CP000878">
    <property type="protein sequence ID" value="ABX08249.1"/>
    <property type="molecule type" value="Genomic_DNA"/>
</dbReference>
<dbReference type="RefSeq" id="WP_012194874.1">
    <property type="nucleotide sequence ID" value="NC_009976.1"/>
</dbReference>
<dbReference type="SMR" id="A9BDT9"/>
<dbReference type="STRING" id="93059.P9211_03181"/>
<dbReference type="KEGG" id="pmj:P9211_03181"/>
<dbReference type="eggNOG" id="COG0852">
    <property type="taxonomic scope" value="Bacteria"/>
</dbReference>
<dbReference type="HOGENOM" id="CLU_042628_9_1_3"/>
<dbReference type="OrthoDB" id="9803286at2"/>
<dbReference type="Proteomes" id="UP000000788">
    <property type="component" value="Chromosome"/>
</dbReference>
<dbReference type="GO" id="GO:0031676">
    <property type="term" value="C:plasma membrane-derived thylakoid membrane"/>
    <property type="evidence" value="ECO:0007669"/>
    <property type="project" value="UniProtKB-SubCell"/>
</dbReference>
<dbReference type="GO" id="GO:0008137">
    <property type="term" value="F:NADH dehydrogenase (ubiquinone) activity"/>
    <property type="evidence" value="ECO:0007669"/>
    <property type="project" value="InterPro"/>
</dbReference>
<dbReference type="GO" id="GO:0048038">
    <property type="term" value="F:quinone binding"/>
    <property type="evidence" value="ECO:0007669"/>
    <property type="project" value="UniProtKB-KW"/>
</dbReference>
<dbReference type="GO" id="GO:0019684">
    <property type="term" value="P:photosynthesis, light reaction"/>
    <property type="evidence" value="ECO:0007669"/>
    <property type="project" value="UniProtKB-UniRule"/>
</dbReference>
<dbReference type="Gene3D" id="3.30.460.80">
    <property type="entry name" value="NADH:ubiquinone oxidoreductase, 30kDa subunit"/>
    <property type="match status" value="1"/>
</dbReference>
<dbReference type="HAMAP" id="MF_01357">
    <property type="entry name" value="NDH1_NuoC"/>
    <property type="match status" value="1"/>
</dbReference>
<dbReference type="InterPro" id="IPR010218">
    <property type="entry name" value="NADH_DH_suC"/>
</dbReference>
<dbReference type="InterPro" id="IPR037232">
    <property type="entry name" value="NADH_quin_OxRdtase_su_C/D-like"/>
</dbReference>
<dbReference type="InterPro" id="IPR001268">
    <property type="entry name" value="NADH_UbQ_OxRdtase_30kDa_su"/>
</dbReference>
<dbReference type="InterPro" id="IPR020396">
    <property type="entry name" value="NADH_UbQ_OxRdtase_CS"/>
</dbReference>
<dbReference type="NCBIfam" id="NF009141">
    <property type="entry name" value="PRK12494.1"/>
    <property type="match status" value="1"/>
</dbReference>
<dbReference type="PANTHER" id="PTHR10884:SF14">
    <property type="entry name" value="NADH DEHYDROGENASE [UBIQUINONE] IRON-SULFUR PROTEIN 3, MITOCHONDRIAL"/>
    <property type="match status" value="1"/>
</dbReference>
<dbReference type="PANTHER" id="PTHR10884">
    <property type="entry name" value="NADH DEHYDROGENASE UBIQUINONE IRON-SULFUR PROTEIN 3"/>
    <property type="match status" value="1"/>
</dbReference>
<dbReference type="Pfam" id="PF00329">
    <property type="entry name" value="Complex1_30kDa"/>
    <property type="match status" value="1"/>
</dbReference>
<dbReference type="SUPFAM" id="SSF143243">
    <property type="entry name" value="Nqo5-like"/>
    <property type="match status" value="1"/>
</dbReference>
<dbReference type="PROSITE" id="PS00542">
    <property type="entry name" value="COMPLEX1_30K"/>
    <property type="match status" value="1"/>
</dbReference>
<comment type="function">
    <text evidence="1">NDH-1 shuttles electrons from an unknown electron donor, via FMN and iron-sulfur (Fe-S) centers, to quinones in the respiratory and/or the photosynthetic chain. The immediate electron acceptor for the enzyme in this species is believed to be plastoquinone. Couples the redox reaction to proton translocation, and thus conserves the redox energy in a proton gradient. Cyanobacterial NDH-1 also plays a role in inorganic carbon-concentration.</text>
</comment>
<comment type="catalytic activity">
    <reaction evidence="1">
        <text>a plastoquinone + NADH + (n+1) H(+)(in) = a plastoquinol + NAD(+) + n H(+)(out)</text>
        <dbReference type="Rhea" id="RHEA:42608"/>
        <dbReference type="Rhea" id="RHEA-COMP:9561"/>
        <dbReference type="Rhea" id="RHEA-COMP:9562"/>
        <dbReference type="ChEBI" id="CHEBI:15378"/>
        <dbReference type="ChEBI" id="CHEBI:17757"/>
        <dbReference type="ChEBI" id="CHEBI:57540"/>
        <dbReference type="ChEBI" id="CHEBI:57945"/>
        <dbReference type="ChEBI" id="CHEBI:62192"/>
    </reaction>
</comment>
<comment type="catalytic activity">
    <reaction evidence="1">
        <text>a plastoquinone + NADPH + (n+1) H(+)(in) = a plastoquinol + NADP(+) + n H(+)(out)</text>
        <dbReference type="Rhea" id="RHEA:42612"/>
        <dbReference type="Rhea" id="RHEA-COMP:9561"/>
        <dbReference type="Rhea" id="RHEA-COMP:9562"/>
        <dbReference type="ChEBI" id="CHEBI:15378"/>
        <dbReference type="ChEBI" id="CHEBI:17757"/>
        <dbReference type="ChEBI" id="CHEBI:57783"/>
        <dbReference type="ChEBI" id="CHEBI:58349"/>
        <dbReference type="ChEBI" id="CHEBI:62192"/>
    </reaction>
</comment>
<comment type="subunit">
    <text evidence="1">NDH-1 can be composed of about 15 different subunits; different subcomplexes with different compositions have been identified which probably have different functions.</text>
</comment>
<comment type="subcellular location">
    <subcellularLocation>
        <location evidence="1">Cellular thylakoid membrane</location>
        <topology evidence="1">Peripheral membrane protein</topology>
        <orientation evidence="1">Cytoplasmic side</orientation>
    </subcellularLocation>
</comment>
<comment type="similarity">
    <text evidence="1">Belongs to the complex I 30 kDa subunit family.</text>
</comment>
<accession>A9BDT9</accession>
<reference key="1">
    <citation type="journal article" date="2007" name="PLoS Genet.">
        <title>Patterns and implications of gene gain and loss in the evolution of Prochlorococcus.</title>
        <authorList>
            <person name="Kettler G.C."/>
            <person name="Martiny A.C."/>
            <person name="Huang K."/>
            <person name="Zucker J."/>
            <person name="Coleman M.L."/>
            <person name="Rodrigue S."/>
            <person name="Chen F."/>
            <person name="Lapidus A."/>
            <person name="Ferriera S."/>
            <person name="Johnson J."/>
            <person name="Steglich C."/>
            <person name="Church G.M."/>
            <person name="Richardson P."/>
            <person name="Chisholm S.W."/>
        </authorList>
    </citation>
    <scope>NUCLEOTIDE SEQUENCE [LARGE SCALE GENOMIC DNA]</scope>
    <source>
        <strain>MIT 9211</strain>
    </source>
</reference>
<name>NDHJ_PROM4</name>